<organism>
    <name type="scientific">Thunnus obesus</name>
    <name type="common">Bigeye tuna</name>
    <dbReference type="NCBI Taxonomy" id="8241"/>
    <lineage>
        <taxon>Eukaryota</taxon>
        <taxon>Metazoa</taxon>
        <taxon>Chordata</taxon>
        <taxon>Craniata</taxon>
        <taxon>Vertebrata</taxon>
        <taxon>Euteleostomi</taxon>
        <taxon>Actinopterygii</taxon>
        <taxon>Neopterygii</taxon>
        <taxon>Teleostei</taxon>
        <taxon>Neoteleostei</taxon>
        <taxon>Acanthomorphata</taxon>
        <taxon>Pelagiaria</taxon>
        <taxon>Scombriformes</taxon>
        <taxon>Scombridae</taxon>
        <taxon>Thunnus</taxon>
    </lineage>
</organism>
<reference key="1">
    <citation type="journal article" date="1994" name="Int. J. Pept. Protein Res.">
        <title>Purification and characterization of gonadotropin I and II from pituitary glands of tuna (Thunnus obesus).</title>
        <authorList>
            <person name="Okada T."/>
            <person name="Kawazoe I."/>
            <person name="Kimura S."/>
            <person name="Sasamoto Y."/>
            <person name="Aida K."/>
            <person name="Kawauchi H."/>
        </authorList>
    </citation>
    <scope>PROTEIN SEQUENCE</scope>
    <source>
        <tissue>Pituitary</tissue>
    </source>
</reference>
<comment type="function">
    <text>Involved in gametogenesis and steroidogenesis.</text>
</comment>
<comment type="subunit">
    <text>Heterodimer of an alpha and a beta chain.</text>
</comment>
<comment type="subcellular location">
    <subcellularLocation>
        <location>Secreted</location>
    </subcellularLocation>
</comment>
<comment type="similarity">
    <text evidence="2">Belongs to the glycoprotein hormones subunit beta family.</text>
</comment>
<evidence type="ECO:0000250" key="1"/>
<evidence type="ECO:0000305" key="2"/>
<keyword id="KW-0903">Direct protein sequencing</keyword>
<keyword id="KW-1015">Disulfide bond</keyword>
<keyword id="KW-0325">Glycoprotein</keyword>
<keyword id="KW-0372">Hormone</keyword>
<keyword id="KW-0964">Secreted</keyword>
<dbReference type="SMR" id="P37206"/>
<dbReference type="GlyCosmos" id="P37206">
    <property type="glycosylation" value="1 site, No reported glycans"/>
</dbReference>
<dbReference type="GO" id="GO:0005737">
    <property type="term" value="C:cytoplasm"/>
    <property type="evidence" value="ECO:0007669"/>
    <property type="project" value="TreeGrafter"/>
</dbReference>
<dbReference type="GO" id="GO:0005615">
    <property type="term" value="C:extracellular space"/>
    <property type="evidence" value="ECO:0007669"/>
    <property type="project" value="TreeGrafter"/>
</dbReference>
<dbReference type="GO" id="GO:0005179">
    <property type="term" value="F:hormone activity"/>
    <property type="evidence" value="ECO:0007669"/>
    <property type="project" value="UniProtKB-KW"/>
</dbReference>
<dbReference type="GO" id="GO:0007186">
    <property type="term" value="P:G protein-coupled receptor signaling pathway"/>
    <property type="evidence" value="ECO:0007669"/>
    <property type="project" value="TreeGrafter"/>
</dbReference>
<dbReference type="GO" id="GO:0030728">
    <property type="term" value="P:ovulation"/>
    <property type="evidence" value="ECO:0007669"/>
    <property type="project" value="TreeGrafter"/>
</dbReference>
<dbReference type="CDD" id="cd00069">
    <property type="entry name" value="GHB_like"/>
    <property type="match status" value="1"/>
</dbReference>
<dbReference type="FunFam" id="2.10.90.10:FF:000007">
    <property type="entry name" value="Luteinizing hormone beta subunit"/>
    <property type="match status" value="1"/>
</dbReference>
<dbReference type="Gene3D" id="2.10.90.10">
    <property type="entry name" value="Cystine-knot cytokines"/>
    <property type="match status" value="1"/>
</dbReference>
<dbReference type="InterPro" id="IPR029034">
    <property type="entry name" value="Cystine-knot_cytokine"/>
</dbReference>
<dbReference type="InterPro" id="IPR006208">
    <property type="entry name" value="Glyco_hormone_CN"/>
</dbReference>
<dbReference type="InterPro" id="IPR001545">
    <property type="entry name" value="Gonadotropin_bsu"/>
</dbReference>
<dbReference type="InterPro" id="IPR018245">
    <property type="entry name" value="Gonadotropin_bsu_CS"/>
</dbReference>
<dbReference type="PANTHER" id="PTHR11515">
    <property type="entry name" value="GLYCOPROTEIN HORMONE BETA CHAIN"/>
    <property type="match status" value="1"/>
</dbReference>
<dbReference type="PANTHER" id="PTHR11515:SF11">
    <property type="entry name" value="LUTROPIN SUBUNIT BETA"/>
    <property type="match status" value="1"/>
</dbReference>
<dbReference type="Pfam" id="PF00007">
    <property type="entry name" value="Cys_knot"/>
    <property type="match status" value="1"/>
</dbReference>
<dbReference type="SMART" id="SM00068">
    <property type="entry name" value="GHB"/>
    <property type="match status" value="1"/>
</dbReference>
<dbReference type="SUPFAM" id="SSF57501">
    <property type="entry name" value="Cystine-knot cytokines"/>
    <property type="match status" value="1"/>
</dbReference>
<dbReference type="PROSITE" id="PS00261">
    <property type="entry name" value="GLYCO_HORMONE_BETA_1"/>
    <property type="match status" value="1"/>
</dbReference>
<dbReference type="PROSITE" id="PS00689">
    <property type="entry name" value="GLYCO_HORMONE_BETA_2"/>
    <property type="match status" value="1"/>
</dbReference>
<protein>
    <recommendedName>
        <fullName>Gonadotropin subunit beta-2</fullName>
    </recommendedName>
    <alternativeName>
        <fullName>GTH-II-beta</fullName>
    </alternativeName>
    <alternativeName>
        <fullName>Gonadotropin beta-II chain</fullName>
    </alternativeName>
</protein>
<accession>P37206</accession>
<feature type="chain" id="PRO_0000149037" description="Gonadotropin subunit beta-2">
    <location>
        <begin position="1"/>
        <end position="115"/>
    </location>
</feature>
<feature type="glycosylation site" description="N-linked (GlcNAc...) asparagine">
    <location>
        <position position="10"/>
    </location>
</feature>
<feature type="disulfide bond" evidence="1">
    <location>
        <begin position="6"/>
        <end position="54"/>
    </location>
</feature>
<feature type="disulfide bond" evidence="1">
    <location>
        <begin position="20"/>
        <end position="69"/>
    </location>
</feature>
<feature type="disulfide bond" evidence="1">
    <location>
        <begin position="23"/>
        <end position="107"/>
    </location>
</feature>
<feature type="disulfide bond" evidence="1">
    <location>
        <begin position="31"/>
        <end position="85"/>
    </location>
</feature>
<feature type="disulfide bond" evidence="1">
    <location>
        <begin position="35"/>
        <end position="87"/>
    </location>
</feature>
<feature type="disulfide bond" evidence="1">
    <location>
        <begin position="90"/>
        <end position="97"/>
    </location>
</feature>
<gene>
    <name type="primary">cgbb</name>
</gene>
<proteinExistence type="evidence at protein level"/>
<sequence length="115" mass="12992">FQLPPCQLINQTVSVEKEGCASCHPVETTICSGHCITKDPVIKIPFSKVYQHVCTYRDFYYKTFELPDCPPGVDPTVTYPVALSCHCGRCAMDTSDCTFESLQPDFCMNDIPFYY</sequence>
<name>GTHB2_THUOB</name>